<reference key="1">
    <citation type="journal article" date="2005" name="Nature">
        <title>Generation and annotation of the DNA sequences of human chromosomes 2 and 4.</title>
        <authorList>
            <person name="Hillier L.W."/>
            <person name="Graves T.A."/>
            <person name="Fulton R.S."/>
            <person name="Fulton L.A."/>
            <person name="Pepin K.H."/>
            <person name="Minx P."/>
            <person name="Wagner-McPherson C."/>
            <person name="Layman D."/>
            <person name="Wylie K."/>
            <person name="Sekhon M."/>
            <person name="Becker M.C."/>
            <person name="Fewell G.A."/>
            <person name="Delehaunty K.D."/>
            <person name="Miner T.L."/>
            <person name="Nash W.E."/>
            <person name="Kremitzki C."/>
            <person name="Oddy L."/>
            <person name="Du H."/>
            <person name="Sun H."/>
            <person name="Bradshaw-Cordum H."/>
            <person name="Ali J."/>
            <person name="Carter J."/>
            <person name="Cordes M."/>
            <person name="Harris A."/>
            <person name="Isak A."/>
            <person name="van Brunt A."/>
            <person name="Nguyen C."/>
            <person name="Du F."/>
            <person name="Courtney L."/>
            <person name="Kalicki J."/>
            <person name="Ozersky P."/>
            <person name="Abbott S."/>
            <person name="Armstrong J."/>
            <person name="Belter E.A."/>
            <person name="Caruso L."/>
            <person name="Cedroni M."/>
            <person name="Cotton M."/>
            <person name="Davidson T."/>
            <person name="Desai A."/>
            <person name="Elliott G."/>
            <person name="Erb T."/>
            <person name="Fronick C."/>
            <person name="Gaige T."/>
            <person name="Haakenson W."/>
            <person name="Haglund K."/>
            <person name="Holmes A."/>
            <person name="Harkins R."/>
            <person name="Kim K."/>
            <person name="Kruchowski S.S."/>
            <person name="Strong C.M."/>
            <person name="Grewal N."/>
            <person name="Goyea E."/>
            <person name="Hou S."/>
            <person name="Levy A."/>
            <person name="Martinka S."/>
            <person name="Mead K."/>
            <person name="McLellan M.D."/>
            <person name="Meyer R."/>
            <person name="Randall-Maher J."/>
            <person name="Tomlinson C."/>
            <person name="Dauphin-Kohlberg S."/>
            <person name="Kozlowicz-Reilly A."/>
            <person name="Shah N."/>
            <person name="Swearengen-Shahid S."/>
            <person name="Snider J."/>
            <person name="Strong J.T."/>
            <person name="Thompson J."/>
            <person name="Yoakum M."/>
            <person name="Leonard S."/>
            <person name="Pearman C."/>
            <person name="Trani L."/>
            <person name="Radionenko M."/>
            <person name="Waligorski J.E."/>
            <person name="Wang C."/>
            <person name="Rock S.M."/>
            <person name="Tin-Wollam A.-M."/>
            <person name="Maupin R."/>
            <person name="Latreille P."/>
            <person name="Wendl M.C."/>
            <person name="Yang S.-P."/>
            <person name="Pohl C."/>
            <person name="Wallis J.W."/>
            <person name="Spieth J."/>
            <person name="Bieri T.A."/>
            <person name="Berkowicz N."/>
            <person name="Nelson J.O."/>
            <person name="Osborne J."/>
            <person name="Ding L."/>
            <person name="Meyer R."/>
            <person name="Sabo A."/>
            <person name="Shotland Y."/>
            <person name="Sinha P."/>
            <person name="Wohldmann P.E."/>
            <person name="Cook L.L."/>
            <person name="Hickenbotham M.T."/>
            <person name="Eldred J."/>
            <person name="Williams D."/>
            <person name="Jones T.A."/>
            <person name="She X."/>
            <person name="Ciccarelli F.D."/>
            <person name="Izaurralde E."/>
            <person name="Taylor J."/>
            <person name="Schmutz J."/>
            <person name="Myers R.M."/>
            <person name="Cox D.R."/>
            <person name="Huang X."/>
            <person name="McPherson J.D."/>
            <person name="Mardis E.R."/>
            <person name="Clifton S.W."/>
            <person name="Warren W.C."/>
            <person name="Chinwalla A.T."/>
            <person name="Eddy S.R."/>
            <person name="Marra M.A."/>
            <person name="Ovcharenko I."/>
            <person name="Furey T.S."/>
            <person name="Miller W."/>
            <person name="Eichler E.E."/>
            <person name="Bork P."/>
            <person name="Suyama M."/>
            <person name="Torrents D."/>
            <person name="Waterston R.H."/>
            <person name="Wilson R.K."/>
        </authorList>
    </citation>
    <scope>NUCLEOTIDE SEQUENCE [LARGE SCALE GENOMIC DNA]</scope>
</reference>
<reference key="2">
    <citation type="journal article" date="2004" name="Genome Res.">
        <title>The status, quality, and expansion of the NIH full-length cDNA project: the Mammalian Gene Collection (MGC).</title>
        <authorList>
            <consortium name="The MGC Project Team"/>
        </authorList>
    </citation>
    <scope>NUCLEOTIDE SEQUENCE [LARGE SCALE MRNA] (ISOFORMS 2 AND 3)</scope>
</reference>
<reference key="3">
    <citation type="journal article" date="2004" name="Nat. Genet.">
        <title>Complete sequencing and characterization of 21,243 full-length human cDNAs.</title>
        <authorList>
            <person name="Ota T."/>
            <person name="Suzuki Y."/>
            <person name="Nishikawa T."/>
            <person name="Otsuki T."/>
            <person name="Sugiyama T."/>
            <person name="Irie R."/>
            <person name="Wakamatsu A."/>
            <person name="Hayashi K."/>
            <person name="Sato H."/>
            <person name="Nagai K."/>
            <person name="Kimura K."/>
            <person name="Makita H."/>
            <person name="Sekine M."/>
            <person name="Obayashi M."/>
            <person name="Nishi T."/>
            <person name="Shibahara T."/>
            <person name="Tanaka T."/>
            <person name="Ishii S."/>
            <person name="Yamamoto J."/>
            <person name="Saito K."/>
            <person name="Kawai Y."/>
            <person name="Isono Y."/>
            <person name="Nakamura Y."/>
            <person name="Nagahari K."/>
            <person name="Murakami K."/>
            <person name="Yasuda T."/>
            <person name="Iwayanagi T."/>
            <person name="Wagatsuma M."/>
            <person name="Shiratori A."/>
            <person name="Sudo H."/>
            <person name="Hosoiri T."/>
            <person name="Kaku Y."/>
            <person name="Kodaira H."/>
            <person name="Kondo H."/>
            <person name="Sugawara M."/>
            <person name="Takahashi M."/>
            <person name="Kanda K."/>
            <person name="Yokoi T."/>
            <person name="Furuya T."/>
            <person name="Kikkawa E."/>
            <person name="Omura Y."/>
            <person name="Abe K."/>
            <person name="Kamihara K."/>
            <person name="Katsuta N."/>
            <person name="Sato K."/>
            <person name="Tanikawa M."/>
            <person name="Yamazaki M."/>
            <person name="Ninomiya K."/>
            <person name="Ishibashi T."/>
            <person name="Yamashita H."/>
            <person name="Murakawa K."/>
            <person name="Fujimori K."/>
            <person name="Tanai H."/>
            <person name="Kimata M."/>
            <person name="Watanabe M."/>
            <person name="Hiraoka S."/>
            <person name="Chiba Y."/>
            <person name="Ishida S."/>
            <person name="Ono Y."/>
            <person name="Takiguchi S."/>
            <person name="Watanabe S."/>
            <person name="Yosida M."/>
            <person name="Hotuta T."/>
            <person name="Kusano J."/>
            <person name="Kanehori K."/>
            <person name="Takahashi-Fujii A."/>
            <person name="Hara H."/>
            <person name="Tanase T.-O."/>
            <person name="Nomura Y."/>
            <person name="Togiya S."/>
            <person name="Komai F."/>
            <person name="Hara R."/>
            <person name="Takeuchi K."/>
            <person name="Arita M."/>
            <person name="Imose N."/>
            <person name="Musashino K."/>
            <person name="Yuuki H."/>
            <person name="Oshima A."/>
            <person name="Sasaki N."/>
            <person name="Aotsuka S."/>
            <person name="Yoshikawa Y."/>
            <person name="Matsunawa H."/>
            <person name="Ichihara T."/>
            <person name="Shiohata N."/>
            <person name="Sano S."/>
            <person name="Moriya S."/>
            <person name="Momiyama H."/>
            <person name="Satoh N."/>
            <person name="Takami S."/>
            <person name="Terashima Y."/>
            <person name="Suzuki O."/>
            <person name="Nakagawa S."/>
            <person name="Senoh A."/>
            <person name="Mizoguchi H."/>
            <person name="Goto Y."/>
            <person name="Shimizu F."/>
            <person name="Wakebe H."/>
            <person name="Hishigaki H."/>
            <person name="Watanabe T."/>
            <person name="Sugiyama A."/>
            <person name="Takemoto M."/>
            <person name="Kawakami B."/>
            <person name="Yamazaki M."/>
            <person name="Watanabe K."/>
            <person name="Kumagai A."/>
            <person name="Itakura S."/>
            <person name="Fukuzumi Y."/>
            <person name="Fujimori Y."/>
            <person name="Komiyama M."/>
            <person name="Tashiro H."/>
            <person name="Tanigami A."/>
            <person name="Fujiwara T."/>
            <person name="Ono T."/>
            <person name="Yamada K."/>
            <person name="Fujii Y."/>
            <person name="Ozaki K."/>
            <person name="Hirao M."/>
            <person name="Ohmori Y."/>
            <person name="Kawabata A."/>
            <person name="Hikiji T."/>
            <person name="Kobatake N."/>
            <person name="Inagaki H."/>
            <person name="Ikema Y."/>
            <person name="Okamoto S."/>
            <person name="Okitani R."/>
            <person name="Kawakami T."/>
            <person name="Noguchi S."/>
            <person name="Itoh T."/>
            <person name="Shigeta K."/>
            <person name="Senba T."/>
            <person name="Matsumura K."/>
            <person name="Nakajima Y."/>
            <person name="Mizuno T."/>
            <person name="Morinaga M."/>
            <person name="Sasaki M."/>
            <person name="Togashi T."/>
            <person name="Oyama M."/>
            <person name="Hata H."/>
            <person name="Watanabe M."/>
            <person name="Komatsu T."/>
            <person name="Mizushima-Sugano J."/>
            <person name="Satoh T."/>
            <person name="Shirai Y."/>
            <person name="Takahashi Y."/>
            <person name="Nakagawa K."/>
            <person name="Okumura K."/>
            <person name="Nagase T."/>
            <person name="Nomura N."/>
            <person name="Kikuchi H."/>
            <person name="Masuho Y."/>
            <person name="Yamashita R."/>
            <person name="Nakai K."/>
            <person name="Yada T."/>
            <person name="Nakamura Y."/>
            <person name="Ohara O."/>
            <person name="Isogai T."/>
            <person name="Sugano S."/>
        </authorList>
    </citation>
    <scope>NUCLEOTIDE SEQUENCE [LARGE SCALE MRNA] OF 77-211 (ISOFORM 1)</scope>
    <source>
        <tissue>Testis</tissue>
    </source>
</reference>
<feature type="chain" id="PRO_0000300498" description="Fer-1-like protein 5">
    <location>
        <begin position="1"/>
        <end position="2057"/>
    </location>
</feature>
<feature type="transmembrane region" description="Helical" evidence="2">
    <location>
        <begin position="1962"/>
        <end position="1982"/>
    </location>
</feature>
<feature type="domain" description="C2 1" evidence="3">
    <location>
        <begin position="1"/>
        <end position="99"/>
    </location>
</feature>
<feature type="domain" description="C2 2" evidence="3">
    <location>
        <begin position="152"/>
        <end position="265"/>
    </location>
</feature>
<feature type="domain" description="C2 3" evidence="3">
    <location>
        <begin position="308"/>
        <end position="425"/>
    </location>
</feature>
<feature type="domain" description="C2 4" evidence="3">
    <location>
        <begin position="1057"/>
        <end position="1188"/>
    </location>
</feature>
<feature type="domain" description="C2 5" evidence="3">
    <location>
        <begin position="1213"/>
        <end position="1346"/>
    </location>
</feature>
<feature type="domain" description="C2 6" evidence="3">
    <location>
        <begin position="1467"/>
        <end position="1587"/>
    </location>
</feature>
<feature type="domain" description="C2 7" evidence="3">
    <location>
        <begin position="1705"/>
        <end position="1853"/>
    </location>
</feature>
<feature type="binding site" evidence="3">
    <location>
        <position position="1502"/>
    </location>
    <ligand>
        <name>Ca(2+)</name>
        <dbReference type="ChEBI" id="CHEBI:29108"/>
        <label>1</label>
    </ligand>
</feature>
<feature type="binding site" evidence="3">
    <location>
        <position position="1502"/>
    </location>
    <ligand>
        <name>Ca(2+)</name>
        <dbReference type="ChEBI" id="CHEBI:29108"/>
        <label>2</label>
    </ligand>
</feature>
<feature type="binding site" evidence="3">
    <location>
        <position position="1508"/>
    </location>
    <ligand>
        <name>Ca(2+)</name>
        <dbReference type="ChEBI" id="CHEBI:29108"/>
        <label>1</label>
    </ligand>
</feature>
<feature type="binding site" evidence="3">
    <location>
        <position position="1557"/>
    </location>
    <ligand>
        <name>Ca(2+)</name>
        <dbReference type="ChEBI" id="CHEBI:29108"/>
        <label>1</label>
    </ligand>
</feature>
<feature type="binding site" evidence="3">
    <location>
        <position position="1557"/>
    </location>
    <ligand>
        <name>Ca(2+)</name>
        <dbReference type="ChEBI" id="CHEBI:29108"/>
        <label>2</label>
    </ligand>
</feature>
<feature type="binding site" evidence="3">
    <location>
        <position position="1558"/>
    </location>
    <ligand>
        <name>Ca(2+)</name>
        <dbReference type="ChEBI" id="CHEBI:29108"/>
        <label>1</label>
    </ligand>
</feature>
<feature type="binding site" evidence="3">
    <location>
        <position position="1559"/>
    </location>
    <ligand>
        <name>Ca(2+)</name>
        <dbReference type="ChEBI" id="CHEBI:29108"/>
        <label>1</label>
    </ligand>
</feature>
<feature type="binding site" evidence="3">
    <location>
        <position position="1559"/>
    </location>
    <ligand>
        <name>Ca(2+)</name>
        <dbReference type="ChEBI" id="CHEBI:29108"/>
        <label>2</label>
    </ligand>
</feature>
<feature type="binding site" evidence="3">
    <location>
        <position position="1559"/>
    </location>
    <ligand>
        <name>Ca(2+)</name>
        <dbReference type="ChEBI" id="CHEBI:29108"/>
        <label>3</label>
    </ligand>
</feature>
<feature type="binding site" evidence="3">
    <location>
        <position position="1562"/>
    </location>
    <ligand>
        <name>Ca(2+)</name>
        <dbReference type="ChEBI" id="CHEBI:29108"/>
        <label>3</label>
    </ligand>
</feature>
<feature type="binding site" evidence="3">
    <location>
        <position position="1565"/>
    </location>
    <ligand>
        <name>Ca(2+)</name>
        <dbReference type="ChEBI" id="CHEBI:29108"/>
        <label>2</label>
    </ligand>
</feature>
<feature type="binding site" evidence="3">
    <location>
        <position position="1565"/>
    </location>
    <ligand>
        <name>Ca(2+)</name>
        <dbReference type="ChEBI" id="CHEBI:29108"/>
        <label>3</label>
    </ligand>
</feature>
<feature type="binding site" evidence="3">
    <location>
        <position position="1824"/>
    </location>
    <ligand>
        <name>Ca(2+)</name>
        <dbReference type="ChEBI" id="CHEBI:29108"/>
        <label>4</label>
    </ligand>
</feature>
<feature type="binding site" evidence="3">
    <location>
        <position position="1827"/>
    </location>
    <ligand>
        <name>Ca(2+)</name>
        <dbReference type="ChEBI" id="CHEBI:29108"/>
        <label>4</label>
    </ligand>
</feature>
<feature type="binding site" evidence="3">
    <location>
        <position position="1830"/>
    </location>
    <ligand>
        <name>Ca(2+)</name>
        <dbReference type="ChEBI" id="CHEBI:29108"/>
        <label>4</label>
    </ligand>
</feature>
<feature type="splice variant" id="VSP_031852" description="In isoform 2 and isoform 3." evidence="4">
    <location>
        <begin position="1"/>
        <end position="1255"/>
    </location>
</feature>
<feature type="splice variant" id="VSP_059071" description="In isoform 3.">
    <location>
        <position position="1298"/>
    </location>
</feature>
<feature type="sequence variant" id="VAR_059285" description="In dbSNP:rs4907201.">
    <original>I</original>
    <variation>T</variation>
    <location>
        <position position="354"/>
    </location>
</feature>
<feature type="sequence variant" id="VAR_059286" description="In dbSNP:rs7599598.">
    <original>T</original>
    <variation>A</variation>
    <location>
        <position position="687"/>
    </location>
</feature>
<organism>
    <name type="scientific">Homo sapiens</name>
    <name type="common">Human</name>
    <dbReference type="NCBI Taxonomy" id="9606"/>
    <lineage>
        <taxon>Eukaryota</taxon>
        <taxon>Metazoa</taxon>
        <taxon>Chordata</taxon>
        <taxon>Craniata</taxon>
        <taxon>Vertebrata</taxon>
        <taxon>Euteleostomi</taxon>
        <taxon>Mammalia</taxon>
        <taxon>Eutheria</taxon>
        <taxon>Euarchontoglires</taxon>
        <taxon>Primates</taxon>
        <taxon>Haplorrhini</taxon>
        <taxon>Catarrhini</taxon>
        <taxon>Hominidae</taxon>
        <taxon>Homo</taxon>
    </lineage>
</organism>
<sequence>MLRLVVQSAKIDPPLAPLPRPCMSIDFRDIKKRTRVVEGNDPVWNETLIWHLWNRPLENDSFLQVTLQDMGSQKKERFIGLATVLLKPLLKQPSEVLFVKDLTLLNHSMKPTDCTVTLQVAHMSNQDIEKTGAEDHLGITAREAASQKLMVPGSTAHRALSSKPQHFQVRVKVFEARQLMGNNIKPVVKVSIAGQQHQTRIKMGNNPFFNEIFFQNFHEVPAKFFDETILIQVVNSSAMRYKAEIGRFQTDIGFIYHSPGHTLLRKWLGLCQPNNPGSGVTGYLKVTIYALGVGDQALIDQKLLYGTDDTDIQIFKSAVVPINMAYLQLFIYCAEDLHLKKHQSVNPQLEVELIGEKLRTHMQTQTDNPIWNQILTFRIQLPCLSSYIKFRVLDCRKKDCPDEIGTASLSLNQISSTGEEIEGVYSGFLPCFGPSFLTLHGGKKAPFRIQEEGACIPDSVRDGLAYRGRVFLELITQIKSYQDSTIKDLSHEVTRIEKHQNRQKYGLCVIFLSCTMMPNFKELIHFEVSIGHYGNKMDLNYKPLVSSTPYSPVIYDGNIYHYVPWYNTKPVVAVTSNWEDVSFRMNCLNLLHFTRDRLKANLDTLKSTRNPKDPALLYQWEKLLRELAEDCKRPLPCMTYQPKATSLDRKRWQLRSLLLQELAQKAKQAKPKDMVATAEDWLYRLNTVLPEPQMGLPDVMIWLVAKEQRVAYAQVPAHSVLFSPAGALHSGRLCGKIQTLFLQYPEGEGQKDVLPAHLRVCMWLGNVTDSKDLQLLRQGDTAVYAEMYENQAKYKDQWGQQGLYHCPNFSDVMGNKTLPMTDFQPPLGWHWQDSWTVEPQRRLLLDIDINKSQVLEEVYENQGRDTRGAWGPAAIPNTDVNGQPMEARENVKCPQGWHFKKDWVVELNHAVDSKGWEYGVGIPPSGLPQVWSPVEKTYHSCRRRRWARVRFRNHGELSHEQETLSFLQLGLAKGEEEGWEYDTFGSKFHLNPQPQSRFRRRCWRRRLAPNKDKGIAPIFLLEGSLAMDLKYHAGKEEDSKTWPWGLDRQFRDPQRQDTRPPNLPFIYCTFNKPHYYQLFCYIYQARNLVSNQILTFQGPFIRVVFLNHSQCTQTLRSSAGPTWAQTLIFQHLLLYENPQDTKESPPLVVLELWQRDFWGKESLWGRSVWPPMVWLDLQDRILPPMRWHPLVKELGKEEGEILASCELILQTEKLGEKQLPILSVPWKNGAYTLPKSIQPTIKRMAIEILAWGLRNMKKASSPQLLVEFGEESLRTEPIRDFQTNPNFPESESVLVLTVLMPTEEAYALPLVVKVVDNWAFGQQTVTGQANIDFLQPYFCDPWAQDYMHPKLPTLSEKKHQDFLGYLYRKFWFKSSKAEDEYEHEVDWWSKLFWATDEHKSLKYKYKDYHTLKVYECELEAVPAFQGLQDFCQTFKLYQEQPKLDSPVVGEFKGLFRIYPFPENPEAPKPPLQFLVWPEREDFPQPCLVRVYMVRAINLQPQDYNGLCDPYVILKLGKTELGNRDMYQPNTLDPIFGMMFELTCNIPLEKDLEIQLYDFDLFSPDDKIGTTVIDLENRLLSGFGAHCGLSKSYCQSGPFRWRDQMPPSYLLERYAKRKGLPPPLFSPEEDAVFYNGKKFKLQSFEPKTPTVHGLGPKKERLALYLLHTQGLVPEHVETRTLYSHSQPGIDQGKVQMWVDIFPKKLGPPGPQVNINPRKPKRYELRCIIWKTANVDLVDDNLSREKTSDIYIKGWLYGLEKDMQKTDIHYHSLTGEADFNWRFIFTMDYLAAERTCVQSQKDYIWSLDATSMKFPARLIIQVWDNDIFSPDDFLGVLELDLSDMPLPARHAKQCSIRMMDADPKWPYFIQYKHFSLFKKKTVTGWWPCQVLDGGKWRLSGKVKMSLEILSEKEALIKPAGRGQSEPNQYPTLHPPLRTNTSFTWLRSPVQNFCYIFWKRYRFKLIAFMVISIIALMLFNFIYSAPHYLAMSWIKPQLQLYPPIKIFNIINSLNTSNASSSILPTQDPNLKPTIDHEWKLHPGPTNHLSDIFPELPAPGD</sequence>
<keyword id="KW-0025">Alternative splicing</keyword>
<keyword id="KW-0106">Calcium</keyword>
<keyword id="KW-1003">Cell membrane</keyword>
<keyword id="KW-0472">Membrane</keyword>
<keyword id="KW-0479">Metal-binding</keyword>
<keyword id="KW-1267">Proteomics identification</keyword>
<keyword id="KW-1185">Reference proteome</keyword>
<keyword id="KW-0677">Repeat</keyword>
<keyword id="KW-0812">Transmembrane</keyword>
<keyword id="KW-1133">Transmembrane helix</keyword>
<proteinExistence type="evidence at protein level"/>
<comment type="function">
    <text evidence="1">Plays a role in myoblast fusion; probable mediator of endocytic recycling for membrane trafficking events during myotube formation.</text>
</comment>
<comment type="cofactor">
    <cofactor evidence="3">
        <name>Ca(2+)</name>
        <dbReference type="ChEBI" id="CHEBI:29108"/>
    </cofactor>
    <text evidence="3">Binds 3 Ca(2+) ions per C2 domain.</text>
</comment>
<comment type="subunit">
    <text evidence="1">Interacts (via second C2 domain) with EHD1 and EHD2.</text>
</comment>
<comment type="subcellular location">
    <subcellularLocation>
        <location evidence="1">Cell membrane</location>
    </subcellularLocation>
    <subcellularLocation>
        <location evidence="5">Membrane</location>
        <topology evidence="5">Single-pass membrane protein</topology>
    </subcellularLocation>
    <text evidence="1">Colocalizes with EHD1 and EHD2 at plasma membrane in myoblasts and myotubes. Localizes into foci at the plasma membrane (By similarity).</text>
</comment>
<comment type="alternative products">
    <event type="alternative splicing"/>
    <isoform>
        <id>A0AVI2-1</id>
        <name>1</name>
        <sequence type="displayed"/>
    </isoform>
    <isoform>
        <id>A0AVI2-2</id>
        <name>2</name>
        <sequence type="described" ref="VSP_031852"/>
    </isoform>
    <isoform>
        <id>A0AVI2-4</id>
        <name>3</name>
        <sequence type="described" ref="VSP_031852 VSP_059071"/>
    </isoform>
</comment>
<comment type="miscellaneous">
    <molecule>Isoform 1</molecule>
    <text evidence="5">Gene prediction based on partial mRNA data.</text>
</comment>
<comment type="similarity">
    <text evidence="5">Belongs to the ferlin family.</text>
</comment>
<accession>A0AVI2</accession>
<accession>A0A096LNV2</accession>
<accession>Q17RH2</accession>
<accession>Q6ZU24</accession>
<evidence type="ECO:0000250" key="1"/>
<evidence type="ECO:0000255" key="2"/>
<evidence type="ECO:0000255" key="3">
    <source>
        <dbReference type="PROSITE-ProRule" id="PRU00041"/>
    </source>
</evidence>
<evidence type="ECO:0000303" key="4">
    <source>
    </source>
</evidence>
<evidence type="ECO:0000305" key="5"/>
<name>FR1L5_HUMAN</name>
<gene>
    <name type="primary">FER1L5</name>
</gene>
<protein>
    <recommendedName>
        <fullName>Fer-1-like protein 5</fullName>
    </recommendedName>
</protein>
<dbReference type="EMBL" id="AC068539">
    <property type="status" value="NOT_ANNOTATED_CDS"/>
    <property type="molecule type" value="Genomic_DNA"/>
</dbReference>
<dbReference type="EMBL" id="AC079754">
    <property type="status" value="NOT_ANNOTATED_CDS"/>
    <property type="molecule type" value="Genomic_DNA"/>
</dbReference>
<dbReference type="EMBL" id="BC117324">
    <property type="protein sequence ID" value="AAI17325.1"/>
    <property type="molecule type" value="mRNA"/>
</dbReference>
<dbReference type="EMBL" id="BC126368">
    <property type="protein sequence ID" value="AAI26369.1"/>
    <property type="molecule type" value="mRNA"/>
</dbReference>
<dbReference type="EMBL" id="AK126032">
    <property type="protein sequence ID" value="BAC86403.1"/>
    <property type="molecule type" value="mRNA"/>
</dbReference>
<dbReference type="CCDS" id="CCDS77438.1">
    <molecule id="A0AVI2-1"/>
</dbReference>
<dbReference type="RefSeq" id="NP_001280012.1">
    <molecule id="A0AVI2-1"/>
    <property type="nucleotide sequence ID" value="NM_001293083.2"/>
</dbReference>
<dbReference type="SMR" id="A0AVI2"/>
<dbReference type="BioGRID" id="124699">
    <property type="interactions" value="4"/>
</dbReference>
<dbReference type="FunCoup" id="A0AVI2">
    <property type="interactions" value="2"/>
</dbReference>
<dbReference type="IntAct" id="A0AVI2">
    <property type="interactions" value="1"/>
</dbReference>
<dbReference type="STRING" id="9606.ENSP00000485238"/>
<dbReference type="GlyGen" id="A0AVI2">
    <property type="glycosylation" value="2 sites, 1 O-linked glycan (1 site)"/>
</dbReference>
<dbReference type="iPTMnet" id="A0AVI2"/>
<dbReference type="PhosphoSitePlus" id="A0AVI2"/>
<dbReference type="BioMuta" id="FER1L5"/>
<dbReference type="jPOST" id="A0AVI2"/>
<dbReference type="MassIVE" id="A0AVI2"/>
<dbReference type="PaxDb" id="9606-ENSP00000485487"/>
<dbReference type="PeptideAtlas" id="A0AVI2"/>
<dbReference type="ProteomicsDB" id="19">
    <molecule id="A0AVI2-1"/>
</dbReference>
<dbReference type="ProteomicsDB" id="20">
    <molecule id="A0AVI2-2"/>
</dbReference>
<dbReference type="Antibodypedia" id="73876">
    <property type="antibodies" value="13 antibodies from 8 providers"/>
</dbReference>
<dbReference type="DNASU" id="90342"/>
<dbReference type="Ensembl" id="ENST00000624922.6">
    <molecule id="A0AVI2-1"/>
    <property type="protein sequence ID" value="ENSP00000485238.1"/>
    <property type="gene ID" value="ENSG00000249715.13"/>
</dbReference>
<dbReference type="GeneID" id="90342"/>
<dbReference type="KEGG" id="hsa:90342"/>
<dbReference type="MANE-Select" id="ENST00000624922.6">
    <property type="protein sequence ID" value="ENSP00000485238.1"/>
    <property type="RefSeq nucleotide sequence ID" value="NM_001293083.2"/>
    <property type="RefSeq protein sequence ID" value="NP_001280012.1"/>
</dbReference>
<dbReference type="UCSC" id="uc010fia.3">
    <molecule id="A0AVI2-1"/>
    <property type="organism name" value="human"/>
</dbReference>
<dbReference type="AGR" id="HGNC:19044"/>
<dbReference type="CTD" id="90342"/>
<dbReference type="DisGeNET" id="90342"/>
<dbReference type="GeneCards" id="FER1L5"/>
<dbReference type="HGNC" id="HGNC:19044">
    <property type="gene designation" value="FER1L5"/>
</dbReference>
<dbReference type="HPA" id="ENSG00000249715">
    <property type="expression patterns" value="Group enriched (choroid plexus, testis)"/>
</dbReference>
<dbReference type="MIM" id="620883">
    <property type="type" value="gene"/>
</dbReference>
<dbReference type="neXtProt" id="NX_A0AVI2"/>
<dbReference type="OpenTargets" id="ENSG00000249715"/>
<dbReference type="PharmGKB" id="PA142671764"/>
<dbReference type="VEuPathDB" id="HostDB:ENSG00000249715"/>
<dbReference type="eggNOG" id="KOG1326">
    <property type="taxonomic scope" value="Eukaryota"/>
</dbReference>
<dbReference type="GeneTree" id="ENSGT00940000161318"/>
<dbReference type="InParanoid" id="A0AVI2"/>
<dbReference type="OMA" id="SEGWEYG"/>
<dbReference type="OrthoDB" id="270970at2759"/>
<dbReference type="PAN-GO" id="A0AVI2">
    <property type="GO annotations" value="10 GO annotations based on evolutionary models"/>
</dbReference>
<dbReference type="PhylomeDB" id="A0AVI2"/>
<dbReference type="PathwayCommons" id="A0AVI2"/>
<dbReference type="SignaLink" id="A0AVI2"/>
<dbReference type="BioGRID-ORCS" id="90342">
    <property type="hits" value="14 hits in 176 CRISPR screens"/>
</dbReference>
<dbReference type="ChiTaRS" id="FER1L5">
    <property type="organism name" value="human"/>
</dbReference>
<dbReference type="GenomeRNAi" id="90342"/>
<dbReference type="Pharos" id="A0AVI2">
    <property type="development level" value="Tdark"/>
</dbReference>
<dbReference type="PRO" id="PR:A0AVI2"/>
<dbReference type="Proteomes" id="UP000005640">
    <property type="component" value="Chromosome 2"/>
</dbReference>
<dbReference type="RNAct" id="A0AVI2">
    <property type="molecule type" value="protein"/>
</dbReference>
<dbReference type="Bgee" id="ENSG00000249715">
    <property type="expression patterns" value="Expressed in sperm and 82 other cell types or tissues"/>
</dbReference>
<dbReference type="ExpressionAtlas" id="A0AVI2">
    <property type="expression patterns" value="baseline and differential"/>
</dbReference>
<dbReference type="GO" id="GO:0005886">
    <property type="term" value="C:plasma membrane"/>
    <property type="evidence" value="ECO:0007669"/>
    <property type="project" value="UniProtKB-SubCell"/>
</dbReference>
<dbReference type="GO" id="GO:0030672">
    <property type="term" value="C:synaptic vesicle membrane"/>
    <property type="evidence" value="ECO:0000318"/>
    <property type="project" value="GO_Central"/>
</dbReference>
<dbReference type="GO" id="GO:0005509">
    <property type="term" value="F:calcium ion binding"/>
    <property type="evidence" value="ECO:0000318"/>
    <property type="project" value="GO_Central"/>
</dbReference>
<dbReference type="GO" id="GO:0046928">
    <property type="term" value="P:regulation of neurotransmitter secretion"/>
    <property type="evidence" value="ECO:0000318"/>
    <property type="project" value="GO_Central"/>
</dbReference>
<dbReference type="CDD" id="cd08373">
    <property type="entry name" value="C2A_Ferlin"/>
    <property type="match status" value="1"/>
</dbReference>
<dbReference type="CDD" id="cd04011">
    <property type="entry name" value="C2B_Ferlin"/>
    <property type="match status" value="1"/>
</dbReference>
<dbReference type="CDD" id="cd04017">
    <property type="entry name" value="C2D_Ferlin"/>
    <property type="match status" value="1"/>
</dbReference>
<dbReference type="CDD" id="cd04037">
    <property type="entry name" value="C2E_Ferlin"/>
    <property type="match status" value="1"/>
</dbReference>
<dbReference type="CDD" id="cd08374">
    <property type="entry name" value="C2F_Ferlin"/>
    <property type="match status" value="1"/>
</dbReference>
<dbReference type="Gene3D" id="2.60.40.150">
    <property type="entry name" value="C2 domain"/>
    <property type="match status" value="6"/>
</dbReference>
<dbReference type="InterPro" id="IPR000008">
    <property type="entry name" value="C2_dom"/>
</dbReference>
<dbReference type="InterPro" id="IPR035892">
    <property type="entry name" value="C2_domain_sf"/>
</dbReference>
<dbReference type="InterPro" id="IPR037726">
    <property type="entry name" value="C2A_Ferlin"/>
</dbReference>
<dbReference type="InterPro" id="IPR037720">
    <property type="entry name" value="C2B_Ferlin"/>
</dbReference>
<dbReference type="InterPro" id="IPR037723">
    <property type="entry name" value="C2D_Ferlin"/>
</dbReference>
<dbReference type="InterPro" id="IPR037724">
    <property type="entry name" value="C2E_Ferlin"/>
</dbReference>
<dbReference type="InterPro" id="IPR037725">
    <property type="entry name" value="C2F_Ferlin"/>
</dbReference>
<dbReference type="InterPro" id="IPR012968">
    <property type="entry name" value="FerIin_dom"/>
</dbReference>
<dbReference type="InterPro" id="IPR037721">
    <property type="entry name" value="Ferlin"/>
</dbReference>
<dbReference type="InterPro" id="IPR012560">
    <property type="entry name" value="Ferlin_A-domain"/>
</dbReference>
<dbReference type="InterPro" id="IPR012561">
    <property type="entry name" value="Ferlin_B-domain"/>
</dbReference>
<dbReference type="InterPro" id="IPR032362">
    <property type="entry name" value="Ferlin_C"/>
</dbReference>
<dbReference type="InterPro" id="IPR055072">
    <property type="entry name" value="Ferlin_DSRM"/>
</dbReference>
<dbReference type="InterPro" id="IPR006614">
    <property type="entry name" value="Peroxin/Ferlin"/>
</dbReference>
<dbReference type="PANTHER" id="PTHR12546">
    <property type="entry name" value="FER-1-LIKE"/>
    <property type="match status" value="1"/>
</dbReference>
<dbReference type="PANTHER" id="PTHR12546:SF34">
    <property type="entry name" value="FER-1-LIKE PROTEIN 5"/>
    <property type="match status" value="1"/>
</dbReference>
<dbReference type="Pfam" id="PF00168">
    <property type="entry name" value="C2"/>
    <property type="match status" value="6"/>
</dbReference>
<dbReference type="Pfam" id="PF22901">
    <property type="entry name" value="dsrm_Ferlin"/>
    <property type="match status" value="1"/>
</dbReference>
<dbReference type="Pfam" id="PF08165">
    <property type="entry name" value="FerA"/>
    <property type="match status" value="1"/>
</dbReference>
<dbReference type="Pfam" id="PF08150">
    <property type="entry name" value="FerB"/>
    <property type="match status" value="1"/>
</dbReference>
<dbReference type="Pfam" id="PF16165">
    <property type="entry name" value="Ferlin_C"/>
    <property type="match status" value="1"/>
</dbReference>
<dbReference type="SMART" id="SM00239">
    <property type="entry name" value="C2"/>
    <property type="match status" value="6"/>
</dbReference>
<dbReference type="SMART" id="SM00694">
    <property type="entry name" value="DysFC"/>
    <property type="match status" value="2"/>
</dbReference>
<dbReference type="SMART" id="SM00693">
    <property type="entry name" value="DysFN"/>
    <property type="match status" value="2"/>
</dbReference>
<dbReference type="SMART" id="SM01200">
    <property type="entry name" value="FerA"/>
    <property type="match status" value="1"/>
</dbReference>
<dbReference type="SMART" id="SM01201">
    <property type="entry name" value="FerB"/>
    <property type="match status" value="1"/>
</dbReference>
<dbReference type="SMART" id="SM01202">
    <property type="entry name" value="FerI"/>
    <property type="match status" value="1"/>
</dbReference>
<dbReference type="SUPFAM" id="SSF49562">
    <property type="entry name" value="C2 domain (Calcium/lipid-binding domain, CaLB)"/>
    <property type="match status" value="7"/>
</dbReference>
<dbReference type="PROSITE" id="PS50004">
    <property type="entry name" value="C2"/>
    <property type="match status" value="7"/>
</dbReference>